<dbReference type="EC" id="5.3.1.24" evidence="1"/>
<dbReference type="EMBL" id="CP001215">
    <property type="protein sequence ID" value="ACP16442.1"/>
    <property type="molecule type" value="Genomic_DNA"/>
</dbReference>
<dbReference type="RefSeq" id="WP_000865112.1">
    <property type="nucleotide sequence ID" value="NC_012581.1"/>
</dbReference>
<dbReference type="SMR" id="C3LAV9"/>
<dbReference type="GeneID" id="45021252"/>
<dbReference type="KEGG" id="bah:BAMEG_3338"/>
<dbReference type="HOGENOM" id="CLU_076364_1_0_9"/>
<dbReference type="UniPathway" id="UPA00035">
    <property type="reaction ID" value="UER00042"/>
</dbReference>
<dbReference type="GO" id="GO:0004640">
    <property type="term" value="F:phosphoribosylanthranilate isomerase activity"/>
    <property type="evidence" value="ECO:0007669"/>
    <property type="project" value="UniProtKB-UniRule"/>
</dbReference>
<dbReference type="GO" id="GO:0000162">
    <property type="term" value="P:L-tryptophan biosynthetic process"/>
    <property type="evidence" value="ECO:0007669"/>
    <property type="project" value="UniProtKB-UniRule"/>
</dbReference>
<dbReference type="CDD" id="cd00405">
    <property type="entry name" value="PRAI"/>
    <property type="match status" value="1"/>
</dbReference>
<dbReference type="FunFam" id="3.20.20.70:FF:000075">
    <property type="entry name" value="Tryptophan biosynthesis protein TRP1"/>
    <property type="match status" value="1"/>
</dbReference>
<dbReference type="Gene3D" id="3.20.20.70">
    <property type="entry name" value="Aldolase class I"/>
    <property type="match status" value="1"/>
</dbReference>
<dbReference type="HAMAP" id="MF_00135">
    <property type="entry name" value="PRAI"/>
    <property type="match status" value="1"/>
</dbReference>
<dbReference type="InterPro" id="IPR013785">
    <property type="entry name" value="Aldolase_TIM"/>
</dbReference>
<dbReference type="InterPro" id="IPR001240">
    <property type="entry name" value="PRAI_dom"/>
</dbReference>
<dbReference type="InterPro" id="IPR011060">
    <property type="entry name" value="RibuloseP-bd_barrel"/>
</dbReference>
<dbReference type="InterPro" id="IPR044643">
    <property type="entry name" value="TrpF_fam"/>
</dbReference>
<dbReference type="NCBIfam" id="NF002297">
    <property type="entry name" value="PRK01222.1-3"/>
    <property type="match status" value="1"/>
</dbReference>
<dbReference type="PANTHER" id="PTHR42894">
    <property type="entry name" value="N-(5'-PHOSPHORIBOSYL)ANTHRANILATE ISOMERASE"/>
    <property type="match status" value="1"/>
</dbReference>
<dbReference type="PANTHER" id="PTHR42894:SF1">
    <property type="entry name" value="N-(5'-PHOSPHORIBOSYL)ANTHRANILATE ISOMERASE"/>
    <property type="match status" value="1"/>
</dbReference>
<dbReference type="Pfam" id="PF00697">
    <property type="entry name" value="PRAI"/>
    <property type="match status" value="1"/>
</dbReference>
<dbReference type="SUPFAM" id="SSF51366">
    <property type="entry name" value="Ribulose-phoshate binding barrel"/>
    <property type="match status" value="1"/>
</dbReference>
<reference key="1">
    <citation type="submission" date="2008-10" db="EMBL/GenBank/DDBJ databases">
        <title>Genome sequence of Bacillus anthracis str. CDC 684.</title>
        <authorList>
            <person name="Dodson R.J."/>
            <person name="Munk A.C."/>
            <person name="Brettin T."/>
            <person name="Bruce D."/>
            <person name="Detter C."/>
            <person name="Tapia R."/>
            <person name="Han C."/>
            <person name="Sutton G."/>
            <person name="Sims D."/>
        </authorList>
    </citation>
    <scope>NUCLEOTIDE SEQUENCE [LARGE SCALE GENOMIC DNA]</scope>
    <source>
        <strain>CDC 684 / NRRL 3495</strain>
    </source>
</reference>
<protein>
    <recommendedName>
        <fullName evidence="1">N-(5'-phosphoribosyl)anthranilate isomerase</fullName>
        <shortName evidence="1">PRAI</shortName>
        <ecNumber evidence="1">5.3.1.24</ecNumber>
    </recommendedName>
</protein>
<name>TRPF_BACAC</name>
<organism>
    <name type="scientific">Bacillus anthracis (strain CDC 684 / NRRL 3495)</name>
    <dbReference type="NCBI Taxonomy" id="568206"/>
    <lineage>
        <taxon>Bacteria</taxon>
        <taxon>Bacillati</taxon>
        <taxon>Bacillota</taxon>
        <taxon>Bacilli</taxon>
        <taxon>Bacillales</taxon>
        <taxon>Bacillaceae</taxon>
        <taxon>Bacillus</taxon>
        <taxon>Bacillus cereus group</taxon>
    </lineage>
</organism>
<comment type="catalytic activity">
    <reaction evidence="1">
        <text>N-(5-phospho-beta-D-ribosyl)anthranilate = 1-(2-carboxyphenylamino)-1-deoxy-D-ribulose 5-phosphate</text>
        <dbReference type="Rhea" id="RHEA:21540"/>
        <dbReference type="ChEBI" id="CHEBI:18277"/>
        <dbReference type="ChEBI" id="CHEBI:58613"/>
        <dbReference type="EC" id="5.3.1.24"/>
    </reaction>
</comment>
<comment type="pathway">
    <text evidence="1">Amino-acid biosynthesis; L-tryptophan biosynthesis; L-tryptophan from chorismate: step 3/5.</text>
</comment>
<comment type="similarity">
    <text evidence="1">Belongs to the TrpF family.</text>
</comment>
<gene>
    <name evidence="1" type="primary">trpF</name>
    <name type="ordered locus">BAMEG_3338</name>
</gene>
<proteinExistence type="inferred from homology"/>
<feature type="chain" id="PRO_1000197074" description="N-(5'-phosphoribosyl)anthranilate isomerase">
    <location>
        <begin position="1"/>
        <end position="204"/>
    </location>
</feature>
<accession>C3LAV9</accession>
<keyword id="KW-0028">Amino-acid biosynthesis</keyword>
<keyword id="KW-0057">Aromatic amino acid biosynthesis</keyword>
<keyword id="KW-0413">Isomerase</keyword>
<keyword id="KW-0822">Tryptophan biosynthesis</keyword>
<sequence length="204" mass="22619">MKVKICGITDMETAKRACEYGADALGFVFAESKRKITPGLAKEIIQELPANVLKIGVFVNESVEVIQKITGNCGLTHVQLHGGEDNHQIRRLNIPSIKSLGVTSESDMKNAQGYETDYILFDSPKEKFHGGNGKTFPWELLAHMPKELREKTILAGGLNTLNIEEAIRTVRPYMVDVSSGVETEGKKDVEKIKQFIIKAKECSK</sequence>
<evidence type="ECO:0000255" key="1">
    <source>
        <dbReference type="HAMAP-Rule" id="MF_00135"/>
    </source>
</evidence>